<proteinExistence type="evidence at protein level"/>
<keyword id="KW-1003">Cell membrane</keyword>
<keyword id="KW-0449">Lipoprotein</keyword>
<keyword id="KW-0472">Membrane</keyword>
<keyword id="KW-0488">Methylation</keyword>
<keyword id="KW-0636">Prenylation</keyword>
<keyword id="KW-1185">Reference proteome</keyword>
<keyword id="KW-0807">Transducer</keyword>
<name>GBG_CAEEL</name>
<dbReference type="EMBL" id="AF291848">
    <property type="protein sequence ID" value="AAK55965.1"/>
    <property type="molecule type" value="mRNA"/>
</dbReference>
<dbReference type="EMBL" id="Z67883">
    <property type="protein sequence ID" value="CAA91806.1"/>
    <property type="molecule type" value="Genomic_DNA"/>
</dbReference>
<dbReference type="PIR" id="T23216">
    <property type="entry name" value="T23216"/>
</dbReference>
<dbReference type="RefSeq" id="NP_001379097.1">
    <property type="nucleotide sequence ID" value="NM_001392864.1"/>
</dbReference>
<dbReference type="RefSeq" id="NP_510145.1">
    <property type="nucleotide sequence ID" value="NM_077744.4"/>
</dbReference>
<dbReference type="SMR" id="P54406"/>
<dbReference type="BioGRID" id="46328">
    <property type="interactions" value="3"/>
</dbReference>
<dbReference type="DIP" id="DIP-27168N"/>
<dbReference type="FunCoup" id="P54406">
    <property type="interactions" value="867"/>
</dbReference>
<dbReference type="STRING" id="6239.K02A4.2.3"/>
<dbReference type="PaxDb" id="6239-K02A4.2.2"/>
<dbReference type="EnsemblMetazoa" id="K02A4.2.1">
    <property type="protein sequence ID" value="K02A4.2.1"/>
    <property type="gene ID" value="WBGene00001681"/>
</dbReference>
<dbReference type="EnsemblMetazoa" id="K02A4.2.2">
    <property type="protein sequence ID" value="K02A4.2.2"/>
    <property type="gene ID" value="WBGene00001681"/>
</dbReference>
<dbReference type="EnsemblMetazoa" id="K02A4.2.3">
    <property type="protein sequence ID" value="K02A4.2.3"/>
    <property type="gene ID" value="WBGene00001681"/>
</dbReference>
<dbReference type="GeneID" id="181424"/>
<dbReference type="UCSC" id="K02A4.2.2">
    <property type="organism name" value="c. elegans"/>
</dbReference>
<dbReference type="AGR" id="WB:WBGene00001681"/>
<dbReference type="WormBase" id="K02A4.2">
    <property type="protein sequence ID" value="CE03458"/>
    <property type="gene ID" value="WBGene00001681"/>
    <property type="gene designation" value="gpc-1"/>
</dbReference>
<dbReference type="eggNOG" id="KOG4119">
    <property type="taxonomic scope" value="Eukaryota"/>
</dbReference>
<dbReference type="HOGENOM" id="CLU_168377_3_1_1"/>
<dbReference type="InParanoid" id="P54406"/>
<dbReference type="OMA" id="FLEPRSC"/>
<dbReference type="OrthoDB" id="6264244at2759"/>
<dbReference type="PhylomeDB" id="P54406"/>
<dbReference type="Reactome" id="R-CEL-1296041">
    <property type="pathway name" value="Activation of G protein gated Potassium channels"/>
</dbReference>
<dbReference type="Reactome" id="R-CEL-202040">
    <property type="pathway name" value="G-protein activation"/>
</dbReference>
<dbReference type="Reactome" id="R-CEL-2514859">
    <property type="pathway name" value="Inactivation, recovery and regulation of the phototransduction cascade"/>
</dbReference>
<dbReference type="Reactome" id="R-CEL-392170">
    <property type="pathway name" value="ADP signalling through P2Y purinoceptor 12"/>
</dbReference>
<dbReference type="Reactome" id="R-CEL-400042">
    <property type="pathway name" value="Adrenaline,noradrenaline inhibits insulin secretion"/>
</dbReference>
<dbReference type="Reactome" id="R-CEL-4086398">
    <property type="pathway name" value="Ca2+ pathway"/>
</dbReference>
<dbReference type="Reactome" id="R-CEL-416476">
    <property type="pathway name" value="G alpha (q) signalling events"/>
</dbReference>
<dbReference type="Reactome" id="R-CEL-416482">
    <property type="pathway name" value="G alpha (12/13) signalling events"/>
</dbReference>
<dbReference type="Reactome" id="R-CEL-418555">
    <property type="pathway name" value="G alpha (s) signalling events"/>
</dbReference>
<dbReference type="Reactome" id="R-CEL-418594">
    <property type="pathway name" value="G alpha (i) signalling events"/>
</dbReference>
<dbReference type="Reactome" id="R-CEL-418597">
    <property type="pathway name" value="G alpha (z) signalling events"/>
</dbReference>
<dbReference type="Reactome" id="R-CEL-428930">
    <property type="pathway name" value="Thromboxane signalling through TP receptor"/>
</dbReference>
<dbReference type="Reactome" id="R-CEL-456926">
    <property type="pathway name" value="Thrombin signalling through proteinase activated receptors (PARs)"/>
</dbReference>
<dbReference type="Reactome" id="R-CEL-6814122">
    <property type="pathway name" value="Cooperation of PDCL (PhLP1) and TRiC/CCT in G-protein beta folding"/>
</dbReference>
<dbReference type="Reactome" id="R-CEL-8964616">
    <property type="pathway name" value="G beta:gamma signalling through CDC42"/>
</dbReference>
<dbReference type="Reactome" id="R-CEL-997272">
    <property type="pathway name" value="Inhibition of voltage gated Ca2+ channels via Gbeta/gamma subunits"/>
</dbReference>
<dbReference type="PRO" id="PR:P54406"/>
<dbReference type="Proteomes" id="UP000001940">
    <property type="component" value="Chromosome X"/>
</dbReference>
<dbReference type="GO" id="GO:0005834">
    <property type="term" value="C:heterotrimeric G-protein complex"/>
    <property type="evidence" value="ECO:0000250"/>
    <property type="project" value="WormBase"/>
</dbReference>
<dbReference type="GO" id="GO:0031681">
    <property type="term" value="F:G-protein beta-subunit binding"/>
    <property type="evidence" value="ECO:0000318"/>
    <property type="project" value="GO_Central"/>
</dbReference>
<dbReference type="GO" id="GO:0007186">
    <property type="term" value="P:G protein-coupled receptor signaling pathway"/>
    <property type="evidence" value="ECO:0000250"/>
    <property type="project" value="WormBase"/>
</dbReference>
<dbReference type="GO" id="GO:0050909">
    <property type="term" value="P:sensory perception of taste"/>
    <property type="evidence" value="ECO:0000315"/>
    <property type="project" value="WormBase"/>
</dbReference>
<dbReference type="CDD" id="cd00068">
    <property type="entry name" value="GGL"/>
    <property type="match status" value="1"/>
</dbReference>
<dbReference type="FunFam" id="4.10.260.10:FF:000001">
    <property type="entry name" value="Guanine nucleotide-binding protein subunit gamma"/>
    <property type="match status" value="1"/>
</dbReference>
<dbReference type="Gene3D" id="4.10.260.10">
    <property type="entry name" value="Transducin (heterotrimeric G protein), gamma chain"/>
    <property type="match status" value="1"/>
</dbReference>
<dbReference type="InterPro" id="IPR015898">
    <property type="entry name" value="G-protein_gamma-like_dom"/>
</dbReference>
<dbReference type="InterPro" id="IPR036284">
    <property type="entry name" value="GGL_sf"/>
</dbReference>
<dbReference type="InterPro" id="IPR001770">
    <property type="entry name" value="Gprotein-gamma"/>
</dbReference>
<dbReference type="PANTHER" id="PTHR13809">
    <property type="entry name" value="GUANINE NUCLEOTIDE-BINDING PROTEIN GAMMA SUBUNIT"/>
    <property type="match status" value="1"/>
</dbReference>
<dbReference type="Pfam" id="PF00631">
    <property type="entry name" value="G-gamma"/>
    <property type="match status" value="1"/>
</dbReference>
<dbReference type="PRINTS" id="PR00321">
    <property type="entry name" value="GPROTEING"/>
</dbReference>
<dbReference type="SMART" id="SM01224">
    <property type="entry name" value="G_gamma"/>
    <property type="match status" value="1"/>
</dbReference>
<dbReference type="SMART" id="SM00224">
    <property type="entry name" value="GGL"/>
    <property type="match status" value="1"/>
</dbReference>
<dbReference type="SUPFAM" id="SSF48670">
    <property type="entry name" value="Transducin (heterotrimeric G protein), gamma chain"/>
    <property type="match status" value="1"/>
</dbReference>
<dbReference type="PROSITE" id="PS50058">
    <property type="entry name" value="G_PROTEIN_GAMMA"/>
    <property type="match status" value="1"/>
</dbReference>
<feature type="chain" id="PRO_0000012675" description="Guanine nucleotide-binding protein subunit gamma">
    <location>
        <begin position="1"/>
        <end position="59"/>
    </location>
</feature>
<feature type="propeptide" id="PRO_0000012676" description="Removed in mature form" evidence="1">
    <location>
        <begin position="60"/>
        <end position="62"/>
    </location>
</feature>
<feature type="region of interest" description="Disordered" evidence="3">
    <location>
        <begin position="40"/>
        <end position="62"/>
    </location>
</feature>
<feature type="compositionally biased region" description="Basic and acidic residues" evidence="3">
    <location>
        <begin position="53"/>
        <end position="62"/>
    </location>
</feature>
<feature type="modified residue" description="Cysteine methyl ester" evidence="1">
    <location>
        <position position="59"/>
    </location>
</feature>
<feature type="lipid moiety-binding region" description="S-geranylgeranyl cysteine" evidence="1">
    <location>
        <position position="59"/>
    </location>
</feature>
<comment type="function">
    <text>Guanine nucleotide-binding proteins (G proteins) are involved as a modulator or transducer in various transmembrane signaling systems. The beta and gamma chains are required for the GTPase activity, for replacement of GDP by GTP, and for G protein-effector interaction.</text>
</comment>
<comment type="subunit">
    <text evidence="2 4">G proteins are composed of 3 units, alpha, beta and gamma (By similarity). Interacts with gpb-1 and gpb-2 (PubMed:11333232).</text>
</comment>
<comment type="subcellular location">
    <subcellularLocation>
        <location evidence="5">Cell membrane</location>
        <topology evidence="5">Lipid-anchor</topology>
        <orientation evidence="5">Cytoplasmic side</orientation>
    </subcellularLocation>
</comment>
<comment type="tissue specificity">
    <text>Predominantly expressed in the central nervous system.</text>
</comment>
<comment type="similarity">
    <text evidence="5">Belongs to the G protein gamma family.</text>
</comment>
<reference key="1">
    <citation type="journal article" date="2001" name="Genetics">
        <title>The G protein beta subunit gpb-2 in Caenorhabditis elegans regulates the G(o)alpha-G(q)alpha signaling network through interactions with the regulator of G protein signaling proteins egl-10 and eat-16.</title>
        <authorList>
            <person name="van Der Linden A.M."/>
            <person name="Simmer F."/>
            <person name="Cuppen E."/>
            <person name="Plasterk R.H.A."/>
        </authorList>
    </citation>
    <scope>NUCLEOTIDE SEQUENCE [MRNA]</scope>
    <scope>INTERACTION WITH GPB-1 AND GPB-2</scope>
    <source>
        <strain>Bristol N2</strain>
    </source>
</reference>
<reference key="2">
    <citation type="journal article" date="1998" name="Science">
        <title>Genome sequence of the nematode C. elegans: a platform for investigating biology.</title>
        <authorList>
            <consortium name="The C. elegans sequencing consortium"/>
        </authorList>
    </citation>
    <scope>NUCLEOTIDE SEQUENCE [LARGE SCALE GENOMIC DNA]</scope>
    <source>
        <strain>Bristol N2</strain>
    </source>
</reference>
<protein>
    <recommendedName>
        <fullName>Guanine nucleotide-binding protein subunit gamma</fullName>
    </recommendedName>
</protein>
<accession>P54406</accession>
<gene>
    <name type="primary">gpc-1</name>
    <name type="ORF">K02A4.2</name>
</gene>
<sequence length="62" mass="7014">MENIKASTEQLCAEANIQRKKVSEVSKELLDFCEKNKTNDMLVSGPTDQHNPFQEKKSCSVL</sequence>
<evidence type="ECO:0000250" key="1"/>
<evidence type="ECO:0000250" key="2">
    <source>
        <dbReference type="UniProtKB" id="P63212"/>
    </source>
</evidence>
<evidence type="ECO:0000256" key="3">
    <source>
        <dbReference type="SAM" id="MobiDB-lite"/>
    </source>
</evidence>
<evidence type="ECO:0000269" key="4">
    <source>
    </source>
</evidence>
<evidence type="ECO:0000305" key="5"/>
<organism>
    <name type="scientific">Caenorhabditis elegans</name>
    <dbReference type="NCBI Taxonomy" id="6239"/>
    <lineage>
        <taxon>Eukaryota</taxon>
        <taxon>Metazoa</taxon>
        <taxon>Ecdysozoa</taxon>
        <taxon>Nematoda</taxon>
        <taxon>Chromadorea</taxon>
        <taxon>Rhabditida</taxon>
        <taxon>Rhabditina</taxon>
        <taxon>Rhabditomorpha</taxon>
        <taxon>Rhabditoidea</taxon>
        <taxon>Rhabditidae</taxon>
        <taxon>Peloderinae</taxon>
        <taxon>Caenorhabditis</taxon>
    </lineage>
</organism>